<feature type="chain" id="PRO_0000436356" description="Inactive UDP-glycosyltransferase 79A6">
    <location>
        <begin position="1"/>
        <end position="314"/>
    </location>
</feature>
<protein>
    <recommendedName>
        <fullName evidence="2">Inactive UDP-glycosyltransferase 79A6</fullName>
    </recommendedName>
    <alternativeName>
        <fullName evidence="2">Inactive flavonol 3-O-glucoside (1-&gt;6) rhamnosyltransferase</fullName>
        <shortName evidence="2">GmF3G6''Rt-b</shortName>
    </alternativeName>
</protein>
<name>FG2KI_SOYBN</name>
<comment type="function">
    <text evidence="1">Has no flavonol 3-O-glucoside (1-&gt;6) rhamnosyltransferase activity in vitro.</text>
</comment>
<comment type="tissue specificity">
    <text evidence="1">Expressed in young leaves, flowers, pods and pod shells. Barely detected in seeds, roots and root nodules.</text>
</comment>
<comment type="miscellaneous">
    <text evidence="1">Flavonol glycosides (FGs) having rhamnose at the 6''-position of glucose or galactose that is bound to the 3-position of kaempferol are present in cv. Koganejiro, whereas FGs of cv. Kitakomachi are devoid of rhamnose.</text>
</comment>
<comment type="miscellaneous">
    <text evidence="1">In contrast to cv. Koganejiro, FG2 of cv. Kitakomachi has a two-base deletion that generates a truncated polypeptide devoid of enzymatic activity.</text>
</comment>
<gene>
    <name evidence="2" type="primary">FG2</name>
    <name evidence="2" type="synonym">UGT79A6</name>
</gene>
<dbReference type="EMBL" id="AB828192">
    <property type="protein sequence ID" value="BAN91400.1"/>
    <property type="molecule type" value="mRNA"/>
</dbReference>
<dbReference type="SMR" id="U3THC0"/>
<dbReference type="STRING" id="3847.U3THC0"/>
<dbReference type="InParanoid" id="U3THC0"/>
<dbReference type="Proteomes" id="UP000008827">
    <property type="component" value="Unplaced"/>
</dbReference>
<dbReference type="GO" id="GO:0035251">
    <property type="term" value="F:UDP-glucosyltransferase activity"/>
    <property type="evidence" value="ECO:0000318"/>
    <property type="project" value="GO_Central"/>
</dbReference>
<dbReference type="FunFam" id="3.40.50.2000:FF:000087">
    <property type="entry name" value="Glycosyltransferase"/>
    <property type="match status" value="1"/>
</dbReference>
<dbReference type="Gene3D" id="3.40.50.2000">
    <property type="entry name" value="Glycogen Phosphorylase B"/>
    <property type="match status" value="2"/>
</dbReference>
<dbReference type="InterPro" id="IPR050481">
    <property type="entry name" value="UDP-glycosyltransf_plant"/>
</dbReference>
<dbReference type="PANTHER" id="PTHR48049">
    <property type="entry name" value="GLYCOSYLTRANSFERASE"/>
    <property type="match status" value="1"/>
</dbReference>
<dbReference type="PANTHER" id="PTHR48049:SF84">
    <property type="entry name" value="UDP-GLYCOSYLTRANSFERASE 79A6"/>
    <property type="match status" value="1"/>
</dbReference>
<dbReference type="SUPFAM" id="SSF53756">
    <property type="entry name" value="UDP-Glycosyltransferase/glycogen phosphorylase"/>
    <property type="match status" value="1"/>
</dbReference>
<reference key="1">
    <citation type="journal article" date="2014" name="Plant Mol. Biol.">
        <title>Linkage mapping, molecular cloning and functional analysis of soybean gene Fg2 encoding flavonol 3-O-glucoside (1-&gt;6) rhamnosyltransferase.</title>
        <authorList>
            <person name="Rojas Rodas F."/>
            <person name="Rodriguez T.O."/>
            <person name="Murai Y."/>
            <person name="Iwashina T."/>
            <person name="Sugawara S."/>
            <person name="Suzuki M."/>
            <person name="Nakabayashi R."/>
            <person name="Yonekura-Sakakibara K."/>
            <person name="Saito K."/>
            <person name="Kitajima J."/>
            <person name="Toda K."/>
            <person name="Takahashi R."/>
        </authorList>
    </citation>
    <scope>NUCLEOTIDE SEQUENCE [MRNA]</scope>
    <scope>FUNCTION</scope>
    <scope>TISSUE SPECIFICITY</scope>
    <source>
        <strain>cv. Kitakomachi</strain>
    </source>
</reference>
<organism>
    <name type="scientific">Glycine max</name>
    <name type="common">Soybean</name>
    <name type="synonym">Glycine hispida</name>
    <dbReference type="NCBI Taxonomy" id="3847"/>
    <lineage>
        <taxon>Eukaryota</taxon>
        <taxon>Viridiplantae</taxon>
        <taxon>Streptophyta</taxon>
        <taxon>Embryophyta</taxon>
        <taxon>Tracheophyta</taxon>
        <taxon>Spermatophyta</taxon>
        <taxon>Magnoliopsida</taxon>
        <taxon>eudicotyledons</taxon>
        <taxon>Gunneridae</taxon>
        <taxon>Pentapetalae</taxon>
        <taxon>rosids</taxon>
        <taxon>fabids</taxon>
        <taxon>Fabales</taxon>
        <taxon>Fabaceae</taxon>
        <taxon>Papilionoideae</taxon>
        <taxon>50 kb inversion clade</taxon>
        <taxon>NPAAA clade</taxon>
        <taxon>indigoferoid/millettioid clade</taxon>
        <taxon>Phaseoleae</taxon>
        <taxon>Glycine</taxon>
        <taxon>Glycine subgen. Soja</taxon>
    </lineage>
</organism>
<accession>U3THC0</accession>
<proteinExistence type="evidence at transcript level"/>
<evidence type="ECO:0000269" key="1">
    <source>
    </source>
</evidence>
<evidence type="ECO:0000303" key="2">
    <source>
    </source>
</evidence>
<keyword id="KW-1185">Reference proteome</keyword>
<sequence length="314" mass="35181">MPSELAMNNDELHVVMFPFLAFGHISPFVQLSNKLFSHGVHVTFLSAASNIPRIRSTLNLNPAINVISLKFPNGITNTAELPPHLAGNLIHALDLTQDQVKSLLLELKPHYVFFDFAQHWLPKLASEVGIKSVHFSVYSAISDAYITVPSRFADVEGRNITFEDLKKPPPGYPQNSNISLKAFEAMDFMFLFTRFGEKNLTGYERVLQSLGECSFIVFKTCKEIEGPYLDYIETQFRKPVLLSGPLVPEPSTDVLEEKWSKWLDGFPAKSVILCSFGSETFLSDYQIKELASGLELTGLPFILVLNFPSNLCQS</sequence>